<gene>
    <name evidence="1" type="primary">ndhB</name>
    <name type="ordered locus">Npun_R3838</name>
</gene>
<sequence>MDFANIASQLNAGTILPEGIVILTLLGVLIVDLILGRTSARWIGYLAIAGLFTSIVALYFQWDNPNPISFTGGFNGDDLSIVFRGIIALSAAVTILMSIRYVDQSGTPLAEFIAILLSATLGGMFLSGASELVMIFISLETLSISSYLLTGYTKRDPRSNEAALKYLLIGASSTAVFLYGVSLLYGLSGGQTELSAIANGIATAKVGQSLGLVIALVFAIAGIGFKISAAPFHQWTPDVYEGAPTPVIAFLSVGSKAAGFALAIRLLTTAFPLVADEWRFVFTALAVLSMILGNVVALAQTSMKRMLAYSSIAQAGFVMIGLIAGTQAGYASMIFYLLVYLFMNLCGFTCIILFSLRTGTDQIAEYSGLYQKDPLLTLGLSIALLSLGGIPPLAGFFGKIYLFWAGWQAGLYWLVLLGLVTTVVSIYYYIRVVKMMVVKEPHEMSDAVKNYPQVRWDLPGLRPLQVGLVITLIATSLAGILSNPLFTLANNSISNTPFLQATINSHVEAQNLLLLPKLDSVSQSQPSVDSTAKI</sequence>
<proteinExistence type="inferred from homology"/>
<accession>B2J565</accession>
<protein>
    <recommendedName>
        <fullName evidence="1">NAD(P)H-quinone oxidoreductase subunit 2</fullName>
        <ecNumber evidence="1">7.1.1.-</ecNumber>
    </recommendedName>
    <alternativeName>
        <fullName evidence="1">NAD(P)H dehydrogenase subunit 2</fullName>
    </alternativeName>
    <alternativeName>
        <fullName evidence="1">NADH-plastoquinone oxidoreductase subunit 2</fullName>
    </alternativeName>
    <alternativeName>
        <fullName evidence="1">NDH-1, subunit 2</fullName>
    </alternativeName>
</protein>
<comment type="function">
    <text evidence="1">NDH-1 shuttles electrons from an unknown electron donor, via FMN and iron-sulfur (Fe-S) centers, to quinones in the respiratory and/or the photosynthetic chain. The immediate electron acceptor for the enzyme in this species is believed to be plastoquinone. Couples the redox reaction to proton translocation, and thus conserves the redox energy in a proton gradient. Cyanobacterial NDH-1 also plays a role in inorganic carbon-concentration.</text>
</comment>
<comment type="catalytic activity">
    <reaction evidence="1">
        <text>a plastoquinone + NADH + (n+1) H(+)(in) = a plastoquinol + NAD(+) + n H(+)(out)</text>
        <dbReference type="Rhea" id="RHEA:42608"/>
        <dbReference type="Rhea" id="RHEA-COMP:9561"/>
        <dbReference type="Rhea" id="RHEA-COMP:9562"/>
        <dbReference type="ChEBI" id="CHEBI:15378"/>
        <dbReference type="ChEBI" id="CHEBI:17757"/>
        <dbReference type="ChEBI" id="CHEBI:57540"/>
        <dbReference type="ChEBI" id="CHEBI:57945"/>
        <dbReference type="ChEBI" id="CHEBI:62192"/>
    </reaction>
</comment>
<comment type="catalytic activity">
    <reaction evidence="1">
        <text>a plastoquinone + NADPH + (n+1) H(+)(in) = a plastoquinol + NADP(+) + n H(+)(out)</text>
        <dbReference type="Rhea" id="RHEA:42612"/>
        <dbReference type="Rhea" id="RHEA-COMP:9561"/>
        <dbReference type="Rhea" id="RHEA-COMP:9562"/>
        <dbReference type="ChEBI" id="CHEBI:15378"/>
        <dbReference type="ChEBI" id="CHEBI:17757"/>
        <dbReference type="ChEBI" id="CHEBI:57783"/>
        <dbReference type="ChEBI" id="CHEBI:58349"/>
        <dbReference type="ChEBI" id="CHEBI:62192"/>
    </reaction>
</comment>
<comment type="subunit">
    <text evidence="1">NDH-1 can be composed of about 15 different subunits; different subcomplexes with different compositions have been identified which probably have different functions.</text>
</comment>
<comment type="subcellular location">
    <subcellularLocation>
        <location evidence="1">Cellular thylakoid membrane</location>
        <topology evidence="1">Multi-pass membrane protein</topology>
    </subcellularLocation>
</comment>
<comment type="similarity">
    <text evidence="1">Belongs to the complex I subunit 2 family.</text>
</comment>
<reference key="1">
    <citation type="journal article" date="2013" name="Plant Physiol.">
        <title>A Nostoc punctiforme Sugar Transporter Necessary to Establish a Cyanobacterium-Plant Symbiosis.</title>
        <authorList>
            <person name="Ekman M."/>
            <person name="Picossi S."/>
            <person name="Campbell E.L."/>
            <person name="Meeks J.C."/>
            <person name="Flores E."/>
        </authorList>
    </citation>
    <scope>NUCLEOTIDE SEQUENCE [LARGE SCALE GENOMIC DNA]</scope>
    <source>
        <strain>ATCC 29133 / PCC 73102</strain>
    </source>
</reference>
<evidence type="ECO:0000255" key="1">
    <source>
        <dbReference type="HAMAP-Rule" id="MF_00445"/>
    </source>
</evidence>
<name>NU2C_NOSP7</name>
<keyword id="KW-0472">Membrane</keyword>
<keyword id="KW-0520">NAD</keyword>
<keyword id="KW-0521">NADP</keyword>
<keyword id="KW-0618">Plastoquinone</keyword>
<keyword id="KW-0874">Quinone</keyword>
<keyword id="KW-1185">Reference proteome</keyword>
<keyword id="KW-0793">Thylakoid</keyword>
<keyword id="KW-1278">Translocase</keyword>
<keyword id="KW-0812">Transmembrane</keyword>
<keyword id="KW-1133">Transmembrane helix</keyword>
<keyword id="KW-0813">Transport</keyword>
<dbReference type="EC" id="7.1.1.-" evidence="1"/>
<dbReference type="EMBL" id="CP001037">
    <property type="protein sequence ID" value="ACC82222.1"/>
    <property type="molecule type" value="Genomic_DNA"/>
</dbReference>
<dbReference type="RefSeq" id="WP_012410193.1">
    <property type="nucleotide sequence ID" value="NC_010628.1"/>
</dbReference>
<dbReference type="SMR" id="B2J565"/>
<dbReference type="STRING" id="63737.Npun_R3838"/>
<dbReference type="EnsemblBacteria" id="ACC82222">
    <property type="protein sequence ID" value="ACC82222"/>
    <property type="gene ID" value="Npun_R3838"/>
</dbReference>
<dbReference type="KEGG" id="npu:Npun_R3838"/>
<dbReference type="eggNOG" id="COG1007">
    <property type="taxonomic scope" value="Bacteria"/>
</dbReference>
<dbReference type="HOGENOM" id="CLU_007100_1_5_3"/>
<dbReference type="OrthoDB" id="9811718at2"/>
<dbReference type="PhylomeDB" id="B2J565"/>
<dbReference type="Proteomes" id="UP000001191">
    <property type="component" value="Chromosome"/>
</dbReference>
<dbReference type="GO" id="GO:0031676">
    <property type="term" value="C:plasma membrane-derived thylakoid membrane"/>
    <property type="evidence" value="ECO:0007669"/>
    <property type="project" value="UniProtKB-SubCell"/>
</dbReference>
<dbReference type="GO" id="GO:0008137">
    <property type="term" value="F:NADH dehydrogenase (ubiquinone) activity"/>
    <property type="evidence" value="ECO:0007669"/>
    <property type="project" value="InterPro"/>
</dbReference>
<dbReference type="GO" id="GO:0048038">
    <property type="term" value="F:quinone binding"/>
    <property type="evidence" value="ECO:0007669"/>
    <property type="project" value="UniProtKB-KW"/>
</dbReference>
<dbReference type="GO" id="GO:0042773">
    <property type="term" value="P:ATP synthesis coupled electron transport"/>
    <property type="evidence" value="ECO:0007669"/>
    <property type="project" value="InterPro"/>
</dbReference>
<dbReference type="GO" id="GO:0019684">
    <property type="term" value="P:photosynthesis, light reaction"/>
    <property type="evidence" value="ECO:0007669"/>
    <property type="project" value="UniProtKB-UniRule"/>
</dbReference>
<dbReference type="HAMAP" id="MF_00445">
    <property type="entry name" value="NDH1_NuoN_1"/>
    <property type="match status" value="1"/>
</dbReference>
<dbReference type="InterPro" id="IPR010096">
    <property type="entry name" value="NADH-Q_OxRdtase_suN/2"/>
</dbReference>
<dbReference type="InterPro" id="IPR001750">
    <property type="entry name" value="ND/Mrp_TM"/>
</dbReference>
<dbReference type="InterPro" id="IPR045693">
    <property type="entry name" value="Ndh2_N"/>
</dbReference>
<dbReference type="NCBIfam" id="TIGR01770">
    <property type="entry name" value="NDH_I_N"/>
    <property type="match status" value="1"/>
</dbReference>
<dbReference type="NCBIfam" id="NF002701">
    <property type="entry name" value="PRK02504.1"/>
    <property type="match status" value="1"/>
</dbReference>
<dbReference type="PANTHER" id="PTHR22773">
    <property type="entry name" value="NADH DEHYDROGENASE"/>
    <property type="match status" value="1"/>
</dbReference>
<dbReference type="Pfam" id="PF19530">
    <property type="entry name" value="Ndh2_N"/>
    <property type="match status" value="1"/>
</dbReference>
<dbReference type="Pfam" id="PF00361">
    <property type="entry name" value="Proton_antipo_M"/>
    <property type="match status" value="1"/>
</dbReference>
<dbReference type="PRINTS" id="PR01434">
    <property type="entry name" value="NADHDHGNASE5"/>
</dbReference>
<feature type="chain" id="PRO_0000391192" description="NAD(P)H-quinone oxidoreductase subunit 2">
    <location>
        <begin position="1"/>
        <end position="534"/>
    </location>
</feature>
<feature type="transmembrane region" description="Helical" evidence="1">
    <location>
        <begin position="15"/>
        <end position="35"/>
    </location>
</feature>
<feature type="transmembrane region" description="Helical" evidence="1">
    <location>
        <begin position="42"/>
        <end position="62"/>
    </location>
</feature>
<feature type="transmembrane region" description="Helical" evidence="1">
    <location>
        <begin position="79"/>
        <end position="99"/>
    </location>
</feature>
<feature type="transmembrane region" description="Helical" evidence="1">
    <location>
        <begin position="109"/>
        <end position="129"/>
    </location>
</feature>
<feature type="transmembrane region" description="Helical" evidence="1">
    <location>
        <begin position="132"/>
        <end position="152"/>
    </location>
</feature>
<feature type="transmembrane region" description="Helical" evidence="1">
    <location>
        <begin position="167"/>
        <end position="187"/>
    </location>
</feature>
<feature type="transmembrane region" description="Helical" evidence="1">
    <location>
        <begin position="210"/>
        <end position="230"/>
    </location>
</feature>
<feature type="transmembrane region" description="Helical" evidence="1">
    <location>
        <begin position="244"/>
        <end position="264"/>
    </location>
</feature>
<feature type="transmembrane region" description="Helical" evidence="1">
    <location>
        <begin position="280"/>
        <end position="300"/>
    </location>
</feature>
<feature type="transmembrane region" description="Helical" evidence="1">
    <location>
        <begin position="306"/>
        <end position="326"/>
    </location>
</feature>
<feature type="transmembrane region" description="Helical" evidence="1">
    <location>
        <begin position="334"/>
        <end position="354"/>
    </location>
</feature>
<feature type="transmembrane region" description="Helical" evidence="1">
    <location>
        <begin position="378"/>
        <end position="398"/>
    </location>
</feature>
<feature type="transmembrane region" description="Helical" evidence="1">
    <location>
        <begin position="410"/>
        <end position="432"/>
    </location>
</feature>
<feature type="transmembrane region" description="Helical" evidence="1">
    <location>
        <begin position="466"/>
        <end position="486"/>
    </location>
</feature>
<organism>
    <name type="scientific">Nostoc punctiforme (strain ATCC 29133 / PCC 73102)</name>
    <dbReference type="NCBI Taxonomy" id="63737"/>
    <lineage>
        <taxon>Bacteria</taxon>
        <taxon>Bacillati</taxon>
        <taxon>Cyanobacteriota</taxon>
        <taxon>Cyanophyceae</taxon>
        <taxon>Nostocales</taxon>
        <taxon>Nostocaceae</taxon>
        <taxon>Nostoc</taxon>
    </lineage>
</organism>